<feature type="chain" id="PRO_1000115142" description="Large ribosomal subunit protein bL33">
    <location>
        <begin position="1"/>
        <end position="55"/>
    </location>
</feature>
<reference key="1">
    <citation type="submission" date="2008-02" db="EMBL/GenBank/DDBJ databases">
        <title>Complete sequence of chromosome of Methylobacterium sp. 4-46.</title>
        <authorList>
            <consortium name="US DOE Joint Genome Institute"/>
            <person name="Copeland A."/>
            <person name="Lucas S."/>
            <person name="Lapidus A."/>
            <person name="Glavina del Rio T."/>
            <person name="Dalin E."/>
            <person name="Tice H."/>
            <person name="Bruce D."/>
            <person name="Goodwin L."/>
            <person name="Pitluck S."/>
            <person name="Chertkov O."/>
            <person name="Brettin T."/>
            <person name="Detter J.C."/>
            <person name="Han C."/>
            <person name="Kuske C.R."/>
            <person name="Schmutz J."/>
            <person name="Larimer F."/>
            <person name="Land M."/>
            <person name="Hauser L."/>
            <person name="Kyrpides N."/>
            <person name="Ivanova N."/>
            <person name="Marx C.J."/>
            <person name="Richardson P."/>
        </authorList>
    </citation>
    <scope>NUCLEOTIDE SEQUENCE [LARGE SCALE GENOMIC DNA]</scope>
    <source>
        <strain>4-46</strain>
    </source>
</reference>
<organism>
    <name type="scientific">Methylobacterium sp. (strain 4-46)</name>
    <dbReference type="NCBI Taxonomy" id="426117"/>
    <lineage>
        <taxon>Bacteria</taxon>
        <taxon>Pseudomonadati</taxon>
        <taxon>Pseudomonadota</taxon>
        <taxon>Alphaproteobacteria</taxon>
        <taxon>Hyphomicrobiales</taxon>
        <taxon>Methylobacteriaceae</taxon>
        <taxon>Methylobacterium</taxon>
    </lineage>
</organism>
<evidence type="ECO:0000255" key="1">
    <source>
        <dbReference type="HAMAP-Rule" id="MF_00294"/>
    </source>
</evidence>
<evidence type="ECO:0000305" key="2"/>
<dbReference type="EMBL" id="CP000943">
    <property type="protein sequence ID" value="ACA20928.1"/>
    <property type="molecule type" value="Genomic_DNA"/>
</dbReference>
<dbReference type="RefSeq" id="WP_012336304.1">
    <property type="nucleotide sequence ID" value="NC_010511.1"/>
</dbReference>
<dbReference type="SMR" id="B0UFA1"/>
<dbReference type="STRING" id="426117.M446_6677"/>
<dbReference type="KEGG" id="met:M446_6677"/>
<dbReference type="eggNOG" id="COG0267">
    <property type="taxonomic scope" value="Bacteria"/>
</dbReference>
<dbReference type="HOGENOM" id="CLU_190949_1_1_5"/>
<dbReference type="GO" id="GO:0022625">
    <property type="term" value="C:cytosolic large ribosomal subunit"/>
    <property type="evidence" value="ECO:0007669"/>
    <property type="project" value="TreeGrafter"/>
</dbReference>
<dbReference type="GO" id="GO:0003735">
    <property type="term" value="F:structural constituent of ribosome"/>
    <property type="evidence" value="ECO:0007669"/>
    <property type="project" value="InterPro"/>
</dbReference>
<dbReference type="GO" id="GO:0006412">
    <property type="term" value="P:translation"/>
    <property type="evidence" value="ECO:0007669"/>
    <property type="project" value="UniProtKB-UniRule"/>
</dbReference>
<dbReference type="Gene3D" id="2.20.28.120">
    <property type="entry name" value="Ribosomal protein L33"/>
    <property type="match status" value="1"/>
</dbReference>
<dbReference type="HAMAP" id="MF_00294">
    <property type="entry name" value="Ribosomal_bL33"/>
    <property type="match status" value="1"/>
</dbReference>
<dbReference type="InterPro" id="IPR001705">
    <property type="entry name" value="Ribosomal_bL33"/>
</dbReference>
<dbReference type="InterPro" id="IPR018264">
    <property type="entry name" value="Ribosomal_bL33_CS"/>
</dbReference>
<dbReference type="InterPro" id="IPR038584">
    <property type="entry name" value="Ribosomal_bL33_sf"/>
</dbReference>
<dbReference type="InterPro" id="IPR011332">
    <property type="entry name" value="Ribosomal_zn-bd"/>
</dbReference>
<dbReference type="NCBIfam" id="NF001860">
    <property type="entry name" value="PRK00595.1"/>
    <property type="match status" value="1"/>
</dbReference>
<dbReference type="NCBIfam" id="TIGR01023">
    <property type="entry name" value="rpmG_bact"/>
    <property type="match status" value="1"/>
</dbReference>
<dbReference type="PANTHER" id="PTHR15238">
    <property type="entry name" value="54S RIBOSOMAL PROTEIN L39, MITOCHONDRIAL"/>
    <property type="match status" value="1"/>
</dbReference>
<dbReference type="PANTHER" id="PTHR15238:SF1">
    <property type="entry name" value="LARGE RIBOSOMAL SUBUNIT PROTEIN BL33M"/>
    <property type="match status" value="1"/>
</dbReference>
<dbReference type="Pfam" id="PF00471">
    <property type="entry name" value="Ribosomal_L33"/>
    <property type="match status" value="1"/>
</dbReference>
<dbReference type="SUPFAM" id="SSF57829">
    <property type="entry name" value="Zn-binding ribosomal proteins"/>
    <property type="match status" value="1"/>
</dbReference>
<dbReference type="PROSITE" id="PS00582">
    <property type="entry name" value="RIBOSOMAL_L33"/>
    <property type="match status" value="1"/>
</dbReference>
<sequence>MAKAVTVKIKLVSTADTGYFYVTKKNSRTQTDKLSFKKYDPVARKHVEFKEAKIK</sequence>
<protein>
    <recommendedName>
        <fullName evidence="1">Large ribosomal subunit protein bL33</fullName>
    </recommendedName>
    <alternativeName>
        <fullName evidence="2">50S ribosomal protein L33</fullName>
    </alternativeName>
</protein>
<keyword id="KW-0687">Ribonucleoprotein</keyword>
<keyword id="KW-0689">Ribosomal protein</keyword>
<comment type="similarity">
    <text evidence="1">Belongs to the bacterial ribosomal protein bL33 family.</text>
</comment>
<gene>
    <name evidence="1" type="primary">rpmG</name>
    <name type="ordered locus">M446_6677</name>
</gene>
<name>RL33_METS4</name>
<proteinExistence type="inferred from homology"/>
<accession>B0UFA1</accession>